<comment type="function">
    <text evidence="1">Acts as a chaperone during the assembly of the 26S proteasome, specifically of the base subcomplex of the PA700/19S regulatory complex (RC). During the base subcomplex assembly is part of an intermediate PSMD9:PSMC6:PSMC3 module, also known as modulator trimer complex; PSMD9 is released during the further base assembly process (By similarity).</text>
</comment>
<comment type="subunit">
    <text evidence="1">Interacts with PSMC3. Part of a transient complex (modulator) containing PSMD9, PSMC6 and PSMC3 formed during the assembly of the 26S proteasome (By similarity).</text>
</comment>
<comment type="similarity">
    <text evidence="2">Belongs to the proteasome subunit p27 family.</text>
</comment>
<dbReference type="EMBL" id="AK002280">
    <property type="protein sequence ID" value="BAB21984.1"/>
    <property type="molecule type" value="mRNA"/>
</dbReference>
<dbReference type="EMBL" id="AK010276">
    <property type="protein sequence ID" value="BAB26813.1"/>
    <property type="molecule type" value="mRNA"/>
</dbReference>
<dbReference type="EMBL" id="AK168863">
    <property type="protein sequence ID" value="BAE40682.1"/>
    <property type="molecule type" value="mRNA"/>
</dbReference>
<dbReference type="EMBL" id="BC051930">
    <property type="protein sequence ID" value="AAH51930.1"/>
    <property type="molecule type" value="mRNA"/>
</dbReference>
<dbReference type="EMBL" id="BC060245">
    <property type="protein sequence ID" value="AAH60245.1"/>
    <property type="molecule type" value="mRNA"/>
</dbReference>
<dbReference type="CCDS" id="CCDS39266.1"/>
<dbReference type="RefSeq" id="NP_080276.2">
    <property type="nucleotide sequence ID" value="NM_026000.2"/>
</dbReference>
<dbReference type="SMR" id="Q9CR00"/>
<dbReference type="BioGRID" id="211979">
    <property type="interactions" value="35"/>
</dbReference>
<dbReference type="FunCoup" id="Q9CR00">
    <property type="interactions" value="3677"/>
</dbReference>
<dbReference type="IntAct" id="Q9CR00">
    <property type="interactions" value="2"/>
</dbReference>
<dbReference type="MINT" id="Q9CR00"/>
<dbReference type="STRING" id="10090.ENSMUSP00000098295"/>
<dbReference type="GlyGen" id="Q9CR00">
    <property type="glycosylation" value="2 sites, 1 N-linked glycan (1 site), 1 O-linked glycan (1 site)"/>
</dbReference>
<dbReference type="iPTMnet" id="Q9CR00"/>
<dbReference type="PhosphoSitePlus" id="Q9CR00"/>
<dbReference type="SwissPalm" id="Q9CR00"/>
<dbReference type="REPRODUCTION-2DPAGE" id="Q9CR00"/>
<dbReference type="CPTAC" id="non-CPTAC-3869"/>
<dbReference type="jPOST" id="Q9CR00"/>
<dbReference type="PaxDb" id="10090-ENSMUSP00000098295"/>
<dbReference type="PeptideAtlas" id="Q9CR00"/>
<dbReference type="ProteomicsDB" id="291576"/>
<dbReference type="Pumba" id="Q9CR00"/>
<dbReference type="DNASU" id="67151"/>
<dbReference type="Ensembl" id="ENSMUST00000100729.9">
    <property type="protein sequence ID" value="ENSMUSP00000098295.5"/>
    <property type="gene ID" value="ENSMUSG00000029440.16"/>
</dbReference>
<dbReference type="GeneID" id="67151"/>
<dbReference type="KEGG" id="mmu:67151"/>
<dbReference type="UCSC" id="uc008znk.1">
    <property type="organism name" value="mouse"/>
</dbReference>
<dbReference type="AGR" id="MGI:1914401"/>
<dbReference type="CTD" id="5715"/>
<dbReference type="MGI" id="MGI:1914401">
    <property type="gene designation" value="Psmd9"/>
</dbReference>
<dbReference type="VEuPathDB" id="HostDB:ENSMUSG00000029440"/>
<dbReference type="eggNOG" id="KOG3129">
    <property type="taxonomic scope" value="Eukaryota"/>
</dbReference>
<dbReference type="GeneTree" id="ENSGT00390000004147"/>
<dbReference type="InParanoid" id="Q9CR00"/>
<dbReference type="OMA" id="DWGGRGM"/>
<dbReference type="OrthoDB" id="72325at2759"/>
<dbReference type="PhylomeDB" id="Q9CR00"/>
<dbReference type="TreeFam" id="TF105995"/>
<dbReference type="Reactome" id="R-MMU-9907900">
    <property type="pathway name" value="Proteasome assembly"/>
</dbReference>
<dbReference type="BioGRID-ORCS" id="67151">
    <property type="hits" value="2 hits in 78 CRISPR screens"/>
</dbReference>
<dbReference type="ChiTaRS" id="Psmd9">
    <property type="organism name" value="mouse"/>
</dbReference>
<dbReference type="PRO" id="PR:Q9CR00"/>
<dbReference type="Proteomes" id="UP000000589">
    <property type="component" value="Chromosome 5"/>
</dbReference>
<dbReference type="RNAct" id="Q9CR00">
    <property type="molecule type" value="protein"/>
</dbReference>
<dbReference type="Bgee" id="ENSMUSG00000029440">
    <property type="expression patterns" value="Expressed in superior surface of tongue and 242 other cell types or tissues"/>
</dbReference>
<dbReference type="ExpressionAtlas" id="Q9CR00">
    <property type="expression patterns" value="baseline and differential"/>
</dbReference>
<dbReference type="GO" id="GO:0005634">
    <property type="term" value="C:nucleus"/>
    <property type="evidence" value="ECO:0000250"/>
    <property type="project" value="BHF-UCL"/>
</dbReference>
<dbReference type="GO" id="GO:0008540">
    <property type="term" value="C:proteasome regulatory particle, base subcomplex"/>
    <property type="evidence" value="ECO:0007669"/>
    <property type="project" value="Ensembl"/>
</dbReference>
<dbReference type="GO" id="GO:0043425">
    <property type="term" value="F:bHLH transcription factor binding"/>
    <property type="evidence" value="ECO:0000250"/>
    <property type="project" value="BHF-UCL"/>
</dbReference>
<dbReference type="GO" id="GO:0003713">
    <property type="term" value="F:transcription coactivator activity"/>
    <property type="evidence" value="ECO:0000250"/>
    <property type="project" value="BHF-UCL"/>
</dbReference>
<dbReference type="GO" id="GO:0046676">
    <property type="term" value="P:negative regulation of insulin secretion"/>
    <property type="evidence" value="ECO:0000250"/>
    <property type="project" value="BHF-UCL"/>
</dbReference>
<dbReference type="GO" id="GO:0045893">
    <property type="term" value="P:positive regulation of DNA-templated transcription"/>
    <property type="evidence" value="ECO:0000250"/>
    <property type="project" value="BHF-UCL"/>
</dbReference>
<dbReference type="GO" id="GO:0032024">
    <property type="term" value="P:positive regulation of insulin secretion"/>
    <property type="evidence" value="ECO:0000250"/>
    <property type="project" value="BHF-UCL"/>
</dbReference>
<dbReference type="GO" id="GO:0070682">
    <property type="term" value="P:proteasome regulatory particle assembly"/>
    <property type="evidence" value="ECO:0000250"/>
    <property type="project" value="UniProtKB"/>
</dbReference>
<dbReference type="FunFam" id="2.30.42.10:FF:000107">
    <property type="entry name" value="26S proteasome non-ATPase regulatory subunit 9"/>
    <property type="match status" value="1"/>
</dbReference>
<dbReference type="Gene3D" id="2.30.42.10">
    <property type="match status" value="1"/>
</dbReference>
<dbReference type="Gene3D" id="6.10.140.1710">
    <property type="match status" value="1"/>
</dbReference>
<dbReference type="InterPro" id="IPR040815">
    <property type="entry name" value="Nas2_N"/>
</dbReference>
<dbReference type="InterPro" id="IPR001478">
    <property type="entry name" value="PDZ"/>
</dbReference>
<dbReference type="InterPro" id="IPR041489">
    <property type="entry name" value="PDZ_6"/>
</dbReference>
<dbReference type="InterPro" id="IPR036034">
    <property type="entry name" value="PDZ_sf"/>
</dbReference>
<dbReference type="InterPro" id="IPR035269">
    <property type="entry name" value="PSMD9"/>
</dbReference>
<dbReference type="PANTHER" id="PTHR12651">
    <property type="entry name" value="26S PROTEASOME NON-ATPASE REGULATORY SUBUNIT 9"/>
    <property type="match status" value="1"/>
</dbReference>
<dbReference type="PANTHER" id="PTHR12651:SF1">
    <property type="entry name" value="26S PROTEASOME NON-ATPASE REGULATORY SUBUNIT 9"/>
    <property type="match status" value="1"/>
</dbReference>
<dbReference type="Pfam" id="PF18265">
    <property type="entry name" value="Nas2_N"/>
    <property type="match status" value="1"/>
</dbReference>
<dbReference type="Pfam" id="PF17820">
    <property type="entry name" value="PDZ_6"/>
    <property type="match status" value="1"/>
</dbReference>
<dbReference type="SMART" id="SM00228">
    <property type="entry name" value="PDZ"/>
    <property type="match status" value="1"/>
</dbReference>
<dbReference type="SUPFAM" id="SSF50156">
    <property type="entry name" value="PDZ domain-like"/>
    <property type="match status" value="1"/>
</dbReference>
<reference key="1">
    <citation type="journal article" date="2005" name="Science">
        <title>The transcriptional landscape of the mammalian genome.</title>
        <authorList>
            <person name="Carninci P."/>
            <person name="Kasukawa T."/>
            <person name="Katayama S."/>
            <person name="Gough J."/>
            <person name="Frith M.C."/>
            <person name="Maeda N."/>
            <person name="Oyama R."/>
            <person name="Ravasi T."/>
            <person name="Lenhard B."/>
            <person name="Wells C."/>
            <person name="Kodzius R."/>
            <person name="Shimokawa K."/>
            <person name="Bajic V.B."/>
            <person name="Brenner S.E."/>
            <person name="Batalov S."/>
            <person name="Forrest A.R."/>
            <person name="Zavolan M."/>
            <person name="Davis M.J."/>
            <person name="Wilming L.G."/>
            <person name="Aidinis V."/>
            <person name="Allen J.E."/>
            <person name="Ambesi-Impiombato A."/>
            <person name="Apweiler R."/>
            <person name="Aturaliya R.N."/>
            <person name="Bailey T.L."/>
            <person name="Bansal M."/>
            <person name="Baxter L."/>
            <person name="Beisel K.W."/>
            <person name="Bersano T."/>
            <person name="Bono H."/>
            <person name="Chalk A.M."/>
            <person name="Chiu K.P."/>
            <person name="Choudhary V."/>
            <person name="Christoffels A."/>
            <person name="Clutterbuck D.R."/>
            <person name="Crowe M.L."/>
            <person name="Dalla E."/>
            <person name="Dalrymple B.P."/>
            <person name="de Bono B."/>
            <person name="Della Gatta G."/>
            <person name="di Bernardo D."/>
            <person name="Down T."/>
            <person name="Engstrom P."/>
            <person name="Fagiolini M."/>
            <person name="Faulkner G."/>
            <person name="Fletcher C.F."/>
            <person name="Fukushima T."/>
            <person name="Furuno M."/>
            <person name="Futaki S."/>
            <person name="Gariboldi M."/>
            <person name="Georgii-Hemming P."/>
            <person name="Gingeras T.R."/>
            <person name="Gojobori T."/>
            <person name="Green R.E."/>
            <person name="Gustincich S."/>
            <person name="Harbers M."/>
            <person name="Hayashi Y."/>
            <person name="Hensch T.K."/>
            <person name="Hirokawa N."/>
            <person name="Hill D."/>
            <person name="Huminiecki L."/>
            <person name="Iacono M."/>
            <person name="Ikeo K."/>
            <person name="Iwama A."/>
            <person name="Ishikawa T."/>
            <person name="Jakt M."/>
            <person name="Kanapin A."/>
            <person name="Katoh M."/>
            <person name="Kawasawa Y."/>
            <person name="Kelso J."/>
            <person name="Kitamura H."/>
            <person name="Kitano H."/>
            <person name="Kollias G."/>
            <person name="Krishnan S.P."/>
            <person name="Kruger A."/>
            <person name="Kummerfeld S.K."/>
            <person name="Kurochkin I.V."/>
            <person name="Lareau L.F."/>
            <person name="Lazarevic D."/>
            <person name="Lipovich L."/>
            <person name="Liu J."/>
            <person name="Liuni S."/>
            <person name="McWilliam S."/>
            <person name="Madan Babu M."/>
            <person name="Madera M."/>
            <person name="Marchionni L."/>
            <person name="Matsuda H."/>
            <person name="Matsuzawa S."/>
            <person name="Miki H."/>
            <person name="Mignone F."/>
            <person name="Miyake S."/>
            <person name="Morris K."/>
            <person name="Mottagui-Tabar S."/>
            <person name="Mulder N."/>
            <person name="Nakano N."/>
            <person name="Nakauchi H."/>
            <person name="Ng P."/>
            <person name="Nilsson R."/>
            <person name="Nishiguchi S."/>
            <person name="Nishikawa S."/>
            <person name="Nori F."/>
            <person name="Ohara O."/>
            <person name="Okazaki Y."/>
            <person name="Orlando V."/>
            <person name="Pang K.C."/>
            <person name="Pavan W.J."/>
            <person name="Pavesi G."/>
            <person name="Pesole G."/>
            <person name="Petrovsky N."/>
            <person name="Piazza S."/>
            <person name="Reed J."/>
            <person name="Reid J.F."/>
            <person name="Ring B.Z."/>
            <person name="Ringwald M."/>
            <person name="Rost B."/>
            <person name="Ruan Y."/>
            <person name="Salzberg S.L."/>
            <person name="Sandelin A."/>
            <person name="Schneider C."/>
            <person name="Schoenbach C."/>
            <person name="Sekiguchi K."/>
            <person name="Semple C.A."/>
            <person name="Seno S."/>
            <person name="Sessa L."/>
            <person name="Sheng Y."/>
            <person name="Shibata Y."/>
            <person name="Shimada H."/>
            <person name="Shimada K."/>
            <person name="Silva D."/>
            <person name="Sinclair B."/>
            <person name="Sperling S."/>
            <person name="Stupka E."/>
            <person name="Sugiura K."/>
            <person name="Sultana R."/>
            <person name="Takenaka Y."/>
            <person name="Taki K."/>
            <person name="Tammoja K."/>
            <person name="Tan S.L."/>
            <person name="Tang S."/>
            <person name="Taylor M.S."/>
            <person name="Tegner J."/>
            <person name="Teichmann S.A."/>
            <person name="Ueda H.R."/>
            <person name="van Nimwegen E."/>
            <person name="Verardo R."/>
            <person name="Wei C.L."/>
            <person name="Yagi K."/>
            <person name="Yamanishi H."/>
            <person name="Zabarovsky E."/>
            <person name="Zhu S."/>
            <person name="Zimmer A."/>
            <person name="Hide W."/>
            <person name="Bult C."/>
            <person name="Grimmond S.M."/>
            <person name="Teasdale R.D."/>
            <person name="Liu E.T."/>
            <person name="Brusic V."/>
            <person name="Quackenbush J."/>
            <person name="Wahlestedt C."/>
            <person name="Mattick J.S."/>
            <person name="Hume D.A."/>
            <person name="Kai C."/>
            <person name="Sasaki D."/>
            <person name="Tomaru Y."/>
            <person name="Fukuda S."/>
            <person name="Kanamori-Katayama M."/>
            <person name="Suzuki M."/>
            <person name="Aoki J."/>
            <person name="Arakawa T."/>
            <person name="Iida J."/>
            <person name="Imamura K."/>
            <person name="Itoh M."/>
            <person name="Kato T."/>
            <person name="Kawaji H."/>
            <person name="Kawagashira N."/>
            <person name="Kawashima T."/>
            <person name="Kojima M."/>
            <person name="Kondo S."/>
            <person name="Konno H."/>
            <person name="Nakano K."/>
            <person name="Ninomiya N."/>
            <person name="Nishio T."/>
            <person name="Okada M."/>
            <person name="Plessy C."/>
            <person name="Shibata K."/>
            <person name="Shiraki T."/>
            <person name="Suzuki S."/>
            <person name="Tagami M."/>
            <person name="Waki K."/>
            <person name="Watahiki A."/>
            <person name="Okamura-Oho Y."/>
            <person name="Suzuki H."/>
            <person name="Kawai J."/>
            <person name="Hayashizaki Y."/>
        </authorList>
    </citation>
    <scope>NUCLEOTIDE SEQUENCE [LARGE SCALE MRNA]</scope>
    <source>
        <strain>C57BL/6J</strain>
        <tissue>Amnion</tissue>
        <tissue>Embryonic stem cell</tissue>
        <tissue>Kidney</tissue>
    </source>
</reference>
<reference key="2">
    <citation type="journal article" date="2004" name="Genome Res.">
        <title>The status, quality, and expansion of the NIH full-length cDNA project: the Mammalian Gene Collection (MGC).</title>
        <authorList>
            <consortium name="The MGC Project Team"/>
        </authorList>
    </citation>
    <scope>NUCLEOTIDE SEQUENCE [LARGE SCALE MRNA]</scope>
    <source>
        <strain>C57BL/6J</strain>
        <tissue>Brain</tissue>
    </source>
</reference>
<reference key="3">
    <citation type="journal article" date="2007" name="Proc. Natl. Acad. Sci. U.S.A.">
        <title>Large-scale phosphorylation analysis of mouse liver.</title>
        <authorList>
            <person name="Villen J."/>
            <person name="Beausoleil S.A."/>
            <person name="Gerber S.A."/>
            <person name="Gygi S.P."/>
        </authorList>
    </citation>
    <scope>PHOSPHORYLATION [LARGE SCALE ANALYSIS] AT SER-128</scope>
    <scope>IDENTIFICATION BY MASS SPECTROMETRY [LARGE SCALE ANALYSIS]</scope>
    <source>
        <tissue>Liver</tissue>
    </source>
</reference>
<reference key="4">
    <citation type="journal article" date="2009" name="Mol. Cell. Proteomics">
        <title>Large scale localization of protein phosphorylation by use of electron capture dissociation mass spectrometry.</title>
        <authorList>
            <person name="Sweet S.M."/>
            <person name="Bailey C.M."/>
            <person name="Cunningham D.L."/>
            <person name="Heath J.K."/>
            <person name="Cooper H.J."/>
        </authorList>
    </citation>
    <scope>PHOSPHORYLATION [LARGE SCALE ANALYSIS] AT SER-128</scope>
    <scope>IDENTIFICATION BY MASS SPECTROMETRY [LARGE SCALE ANALYSIS]</scope>
    <source>
        <tissue>Embryonic fibroblast</tissue>
    </source>
</reference>
<reference key="5">
    <citation type="journal article" date="2010" name="Cell">
        <title>A tissue-specific atlas of mouse protein phosphorylation and expression.</title>
        <authorList>
            <person name="Huttlin E.L."/>
            <person name="Jedrychowski M.P."/>
            <person name="Elias J.E."/>
            <person name="Goswami T."/>
            <person name="Rad R."/>
            <person name="Beausoleil S.A."/>
            <person name="Villen J."/>
            <person name="Haas W."/>
            <person name="Sowa M.E."/>
            <person name="Gygi S.P."/>
        </authorList>
    </citation>
    <scope>PHOSPHORYLATION [LARGE SCALE ANALYSIS] AT SER-128</scope>
    <scope>IDENTIFICATION BY MASS SPECTROMETRY [LARGE SCALE ANALYSIS]</scope>
    <source>
        <tissue>Brain</tissue>
        <tissue>Heart</tissue>
        <tissue>Kidney</tissue>
        <tissue>Liver</tissue>
        <tissue>Lung</tissue>
        <tissue>Pancreas</tissue>
        <tissue>Spleen</tissue>
        <tissue>Testis</tissue>
    </source>
</reference>
<evidence type="ECO:0000250" key="1"/>
<evidence type="ECO:0000305" key="2"/>
<evidence type="ECO:0007744" key="3">
    <source>
    </source>
</evidence>
<evidence type="ECO:0007744" key="4">
    <source>
    </source>
</evidence>
<evidence type="ECO:0007744" key="5">
    <source>
    </source>
</evidence>
<keyword id="KW-0143">Chaperone</keyword>
<keyword id="KW-0597">Phosphoprotein</keyword>
<keyword id="KW-1185">Reference proteome</keyword>
<sequence length="222" mass="24720">MSGEDVPHRAESSEARAAAVSDIQDLMRRKEEIEAEIKANYDVLESQKGIGMNEPLVDCEGYPRADVDLYQVRTARHNIICLQNDHKALMKQVEEALHQLHARDKEKQARDMAEAREEAMNRRLASNSPVLPQAFARVNSISPGSPASIAGLQVDDEIVEFGSVNTQNFQSVQNVGTVVQHSEGKPLNVTVIRRGEKHQLRLIPTRWAGKGLLGCNIIPLQR</sequence>
<name>PSMD9_MOUSE</name>
<protein>
    <recommendedName>
        <fullName>26S proteasome non-ATPase regulatory subunit 9</fullName>
    </recommendedName>
    <alternativeName>
        <fullName>26S proteasome regulatory subunit p27</fullName>
    </alternativeName>
</protein>
<accession>Q9CR00</accession>
<accession>Q3TG66</accession>
<feature type="chain" id="PRO_0000173853" description="26S proteasome non-ATPase regulatory subunit 9">
    <location>
        <begin position="1"/>
        <end position="222"/>
    </location>
</feature>
<feature type="domain" description="PDZ">
    <location>
        <begin position="108"/>
        <end position="194"/>
    </location>
</feature>
<feature type="modified residue" description="Phosphoserine" evidence="3 4 5">
    <location>
        <position position="128"/>
    </location>
</feature>
<gene>
    <name type="primary">Psmd9</name>
</gene>
<organism>
    <name type="scientific">Mus musculus</name>
    <name type="common">Mouse</name>
    <dbReference type="NCBI Taxonomy" id="10090"/>
    <lineage>
        <taxon>Eukaryota</taxon>
        <taxon>Metazoa</taxon>
        <taxon>Chordata</taxon>
        <taxon>Craniata</taxon>
        <taxon>Vertebrata</taxon>
        <taxon>Euteleostomi</taxon>
        <taxon>Mammalia</taxon>
        <taxon>Eutheria</taxon>
        <taxon>Euarchontoglires</taxon>
        <taxon>Glires</taxon>
        <taxon>Rodentia</taxon>
        <taxon>Myomorpha</taxon>
        <taxon>Muroidea</taxon>
        <taxon>Muridae</taxon>
        <taxon>Murinae</taxon>
        <taxon>Mus</taxon>
        <taxon>Mus</taxon>
    </lineage>
</organism>
<proteinExistence type="evidence at protein level"/>